<evidence type="ECO:0000255" key="1">
    <source>
        <dbReference type="HAMAP-Rule" id="MF_01217"/>
    </source>
</evidence>
<evidence type="ECO:0000255" key="2">
    <source>
        <dbReference type="PROSITE-ProRule" id="PRU00258"/>
    </source>
</evidence>
<reference key="1">
    <citation type="journal article" date="2008" name="BMC Genomics">
        <title>The missing link: Bordetella petrii is endowed with both the metabolic versatility of environmental bacteria and virulence traits of pathogenic Bordetellae.</title>
        <authorList>
            <person name="Gross R."/>
            <person name="Guzman C.A."/>
            <person name="Sebaihia M."/>
            <person name="Martin dos Santos V.A.P."/>
            <person name="Pieper D.H."/>
            <person name="Koebnik R."/>
            <person name="Lechner M."/>
            <person name="Bartels D."/>
            <person name="Buhrmester J."/>
            <person name="Choudhuri J.V."/>
            <person name="Ebensen T."/>
            <person name="Gaigalat L."/>
            <person name="Herrmann S."/>
            <person name="Khachane A.N."/>
            <person name="Larisch C."/>
            <person name="Link S."/>
            <person name="Linke B."/>
            <person name="Meyer F."/>
            <person name="Mormann S."/>
            <person name="Nakunst D."/>
            <person name="Rueckert C."/>
            <person name="Schneiker-Bekel S."/>
            <person name="Schulze K."/>
            <person name="Voerholter F.-J."/>
            <person name="Yevsa T."/>
            <person name="Engle J.T."/>
            <person name="Goldman W.E."/>
            <person name="Puehler A."/>
            <person name="Goebel U.B."/>
            <person name="Goesmann A."/>
            <person name="Bloecker H."/>
            <person name="Kaiser O."/>
            <person name="Martinez-Arias R."/>
        </authorList>
    </citation>
    <scope>NUCLEOTIDE SEQUENCE [LARGE SCALE GENOMIC DNA]</scope>
    <source>
        <strain>ATCC BAA-461 / DSM 12804 / CCUG 43448</strain>
    </source>
</reference>
<comment type="function">
    <text evidence="1">Carrier of the growing fatty acid chain in fatty acid biosynthesis.</text>
</comment>
<comment type="pathway">
    <text evidence="1">Lipid metabolism; fatty acid biosynthesis.</text>
</comment>
<comment type="subcellular location">
    <subcellularLocation>
        <location evidence="1">Cytoplasm</location>
    </subcellularLocation>
</comment>
<comment type="PTM">
    <text evidence="1">4'-phosphopantetheine is transferred from CoA to a specific serine of apo-ACP by AcpS. This modification is essential for activity because fatty acids are bound in thioester linkage to the sulfhydryl of the prosthetic group.</text>
</comment>
<comment type="similarity">
    <text evidence="1">Belongs to the acyl carrier protein (ACP) family.</text>
</comment>
<organism>
    <name type="scientific">Bordetella petrii (strain ATCC BAA-461 / DSM 12804 / CCUG 43448)</name>
    <dbReference type="NCBI Taxonomy" id="340100"/>
    <lineage>
        <taxon>Bacteria</taxon>
        <taxon>Pseudomonadati</taxon>
        <taxon>Pseudomonadota</taxon>
        <taxon>Betaproteobacteria</taxon>
        <taxon>Burkholderiales</taxon>
        <taxon>Alcaligenaceae</taxon>
        <taxon>Bordetella</taxon>
    </lineage>
</organism>
<gene>
    <name evidence="1" type="primary">acpP</name>
    <name type="ordered locus">Bpet1756</name>
</gene>
<accession>A9III0</accession>
<dbReference type="EMBL" id="AM902716">
    <property type="protein sequence ID" value="CAP42095.1"/>
    <property type="molecule type" value="Genomic_DNA"/>
</dbReference>
<dbReference type="SMR" id="A9III0"/>
<dbReference type="STRING" id="94624.Bpet1756"/>
<dbReference type="KEGG" id="bpt:Bpet1756"/>
<dbReference type="eggNOG" id="COG0236">
    <property type="taxonomic scope" value="Bacteria"/>
</dbReference>
<dbReference type="UniPathway" id="UPA00094"/>
<dbReference type="Proteomes" id="UP000001225">
    <property type="component" value="Chromosome"/>
</dbReference>
<dbReference type="GO" id="GO:0005829">
    <property type="term" value="C:cytosol"/>
    <property type="evidence" value="ECO:0007669"/>
    <property type="project" value="TreeGrafter"/>
</dbReference>
<dbReference type="GO" id="GO:0016020">
    <property type="term" value="C:membrane"/>
    <property type="evidence" value="ECO:0007669"/>
    <property type="project" value="GOC"/>
</dbReference>
<dbReference type="GO" id="GO:0000035">
    <property type="term" value="F:acyl binding"/>
    <property type="evidence" value="ECO:0007669"/>
    <property type="project" value="TreeGrafter"/>
</dbReference>
<dbReference type="GO" id="GO:0000036">
    <property type="term" value="F:acyl carrier activity"/>
    <property type="evidence" value="ECO:0007669"/>
    <property type="project" value="UniProtKB-UniRule"/>
</dbReference>
<dbReference type="GO" id="GO:0009245">
    <property type="term" value="P:lipid A biosynthetic process"/>
    <property type="evidence" value="ECO:0007669"/>
    <property type="project" value="TreeGrafter"/>
</dbReference>
<dbReference type="FunFam" id="1.10.1200.10:FF:000001">
    <property type="entry name" value="Acyl carrier protein"/>
    <property type="match status" value="1"/>
</dbReference>
<dbReference type="Gene3D" id="1.10.1200.10">
    <property type="entry name" value="ACP-like"/>
    <property type="match status" value="1"/>
</dbReference>
<dbReference type="HAMAP" id="MF_01217">
    <property type="entry name" value="Acyl_carrier"/>
    <property type="match status" value="1"/>
</dbReference>
<dbReference type="InterPro" id="IPR003231">
    <property type="entry name" value="ACP"/>
</dbReference>
<dbReference type="InterPro" id="IPR036736">
    <property type="entry name" value="ACP-like_sf"/>
</dbReference>
<dbReference type="InterPro" id="IPR009081">
    <property type="entry name" value="PP-bd_ACP"/>
</dbReference>
<dbReference type="InterPro" id="IPR006162">
    <property type="entry name" value="Ppantetheine_attach_site"/>
</dbReference>
<dbReference type="NCBIfam" id="TIGR00517">
    <property type="entry name" value="acyl_carrier"/>
    <property type="match status" value="1"/>
</dbReference>
<dbReference type="NCBIfam" id="NF002148">
    <property type="entry name" value="PRK00982.1-2"/>
    <property type="match status" value="1"/>
</dbReference>
<dbReference type="NCBIfam" id="NF002149">
    <property type="entry name" value="PRK00982.1-3"/>
    <property type="match status" value="1"/>
</dbReference>
<dbReference type="NCBIfam" id="NF002150">
    <property type="entry name" value="PRK00982.1-4"/>
    <property type="match status" value="1"/>
</dbReference>
<dbReference type="NCBIfam" id="NF002151">
    <property type="entry name" value="PRK00982.1-5"/>
    <property type="match status" value="1"/>
</dbReference>
<dbReference type="PANTHER" id="PTHR20863">
    <property type="entry name" value="ACYL CARRIER PROTEIN"/>
    <property type="match status" value="1"/>
</dbReference>
<dbReference type="PANTHER" id="PTHR20863:SF76">
    <property type="entry name" value="CARRIER DOMAIN-CONTAINING PROTEIN"/>
    <property type="match status" value="1"/>
</dbReference>
<dbReference type="Pfam" id="PF00550">
    <property type="entry name" value="PP-binding"/>
    <property type="match status" value="1"/>
</dbReference>
<dbReference type="SUPFAM" id="SSF47336">
    <property type="entry name" value="ACP-like"/>
    <property type="match status" value="1"/>
</dbReference>
<dbReference type="PROSITE" id="PS50075">
    <property type="entry name" value="CARRIER"/>
    <property type="match status" value="1"/>
</dbReference>
<dbReference type="PROSITE" id="PS00012">
    <property type="entry name" value="PHOSPHOPANTETHEINE"/>
    <property type="match status" value="1"/>
</dbReference>
<proteinExistence type="inferred from homology"/>
<keyword id="KW-0963">Cytoplasm</keyword>
<keyword id="KW-0275">Fatty acid biosynthesis</keyword>
<keyword id="KW-0276">Fatty acid metabolism</keyword>
<keyword id="KW-0444">Lipid biosynthesis</keyword>
<keyword id="KW-0443">Lipid metabolism</keyword>
<keyword id="KW-0596">Phosphopantetheine</keyword>
<keyword id="KW-0597">Phosphoprotein</keyword>
<sequence>MESIEQRVKKIVAEQLGVNEAEIKNESSFLDDLGADSLDMVELVMALEDEFETEIPDEEAEKITTVQQAVDYINSHGKQ</sequence>
<name>ACP_BORPD</name>
<feature type="chain" id="PRO_1000139004" description="Acyl carrier protein">
    <location>
        <begin position="1"/>
        <end position="79"/>
    </location>
</feature>
<feature type="domain" description="Carrier" evidence="2">
    <location>
        <begin position="2"/>
        <end position="77"/>
    </location>
</feature>
<feature type="modified residue" description="O-(pantetheine 4'-phosphoryl)serine" evidence="2">
    <location>
        <position position="37"/>
    </location>
</feature>
<protein>
    <recommendedName>
        <fullName evidence="1">Acyl carrier protein</fullName>
        <shortName evidence="1">ACP</shortName>
    </recommendedName>
</protein>